<protein>
    <recommendedName>
        <fullName>ATP-dependent RNA helicase dbp9</fullName>
        <ecNumber>3.6.4.13</ecNumber>
    </recommendedName>
</protein>
<organism>
    <name type="scientific">Aspergillus terreus (strain NIH 2624 / FGSC A1156)</name>
    <dbReference type="NCBI Taxonomy" id="341663"/>
    <lineage>
        <taxon>Eukaryota</taxon>
        <taxon>Fungi</taxon>
        <taxon>Dikarya</taxon>
        <taxon>Ascomycota</taxon>
        <taxon>Pezizomycotina</taxon>
        <taxon>Eurotiomycetes</taxon>
        <taxon>Eurotiomycetidae</taxon>
        <taxon>Eurotiales</taxon>
        <taxon>Aspergillaceae</taxon>
        <taxon>Aspergillus</taxon>
        <taxon>Aspergillus subgen. Circumdati</taxon>
    </lineage>
</organism>
<accession>Q0CY48</accession>
<proteinExistence type="inferred from homology"/>
<gene>
    <name type="primary">dbp9</name>
    <name type="ORF">ATEG_01386</name>
</gene>
<keyword id="KW-0067">ATP-binding</keyword>
<keyword id="KW-0347">Helicase</keyword>
<keyword id="KW-0378">Hydrolase</keyword>
<keyword id="KW-0547">Nucleotide-binding</keyword>
<keyword id="KW-0539">Nucleus</keyword>
<keyword id="KW-1185">Reference proteome</keyword>
<keyword id="KW-0690">Ribosome biogenesis</keyword>
<keyword id="KW-0694">RNA-binding</keyword>
<keyword id="KW-0698">rRNA processing</keyword>
<dbReference type="EC" id="3.6.4.13"/>
<dbReference type="EMBL" id="CH476595">
    <property type="protein sequence ID" value="EAU38143.1"/>
    <property type="status" value="ALT_SEQ"/>
    <property type="molecule type" value="Genomic_DNA"/>
</dbReference>
<dbReference type="RefSeq" id="XP_001208751.1">
    <property type="nucleotide sequence ID" value="XM_001208751.1"/>
</dbReference>
<dbReference type="SMR" id="Q0CY48"/>
<dbReference type="STRING" id="341663.Q0CY48"/>
<dbReference type="GeneID" id="4315699"/>
<dbReference type="eggNOG" id="KOG0346">
    <property type="taxonomic scope" value="Eukaryota"/>
</dbReference>
<dbReference type="OrthoDB" id="1191041at2759"/>
<dbReference type="Proteomes" id="UP000007963">
    <property type="component" value="Unassembled WGS sequence"/>
</dbReference>
<dbReference type="GO" id="GO:0005829">
    <property type="term" value="C:cytosol"/>
    <property type="evidence" value="ECO:0007669"/>
    <property type="project" value="TreeGrafter"/>
</dbReference>
<dbReference type="GO" id="GO:0005730">
    <property type="term" value="C:nucleolus"/>
    <property type="evidence" value="ECO:0007669"/>
    <property type="project" value="UniProtKB-SubCell"/>
</dbReference>
<dbReference type="GO" id="GO:0005524">
    <property type="term" value="F:ATP binding"/>
    <property type="evidence" value="ECO:0007669"/>
    <property type="project" value="UniProtKB-KW"/>
</dbReference>
<dbReference type="GO" id="GO:0016887">
    <property type="term" value="F:ATP hydrolysis activity"/>
    <property type="evidence" value="ECO:0007669"/>
    <property type="project" value="RHEA"/>
</dbReference>
<dbReference type="GO" id="GO:0003678">
    <property type="term" value="F:DNA helicase activity"/>
    <property type="evidence" value="ECO:0007669"/>
    <property type="project" value="EnsemblFungi"/>
</dbReference>
<dbReference type="GO" id="GO:0033677">
    <property type="term" value="F:DNA/RNA helicase activity"/>
    <property type="evidence" value="ECO:0007669"/>
    <property type="project" value="EnsemblFungi"/>
</dbReference>
<dbReference type="GO" id="GO:0003723">
    <property type="term" value="F:RNA binding"/>
    <property type="evidence" value="ECO:0007669"/>
    <property type="project" value="UniProtKB-KW"/>
</dbReference>
<dbReference type="GO" id="GO:0003724">
    <property type="term" value="F:RNA helicase activity"/>
    <property type="evidence" value="ECO:0007669"/>
    <property type="project" value="UniProtKB-EC"/>
</dbReference>
<dbReference type="GO" id="GO:0000463">
    <property type="term" value="P:maturation of LSU-rRNA from tricistronic rRNA transcript (SSU-rRNA, 5.8S rRNA, LSU-rRNA)"/>
    <property type="evidence" value="ECO:0007669"/>
    <property type="project" value="EnsemblFungi"/>
</dbReference>
<dbReference type="CDD" id="cd17961">
    <property type="entry name" value="DEADc_DDX56"/>
    <property type="match status" value="1"/>
</dbReference>
<dbReference type="CDD" id="cd18787">
    <property type="entry name" value="SF2_C_DEAD"/>
    <property type="match status" value="1"/>
</dbReference>
<dbReference type="Gene3D" id="3.40.50.300">
    <property type="entry name" value="P-loop containing nucleotide triphosphate hydrolases"/>
    <property type="match status" value="2"/>
</dbReference>
<dbReference type="InterPro" id="IPR011545">
    <property type="entry name" value="DEAD/DEAH_box_helicase_dom"/>
</dbReference>
<dbReference type="InterPro" id="IPR050079">
    <property type="entry name" value="DEAD_box_RNA_helicase"/>
</dbReference>
<dbReference type="InterPro" id="IPR014001">
    <property type="entry name" value="Helicase_ATP-bd"/>
</dbReference>
<dbReference type="InterPro" id="IPR001650">
    <property type="entry name" value="Helicase_C-like"/>
</dbReference>
<dbReference type="InterPro" id="IPR027417">
    <property type="entry name" value="P-loop_NTPase"/>
</dbReference>
<dbReference type="InterPro" id="IPR014014">
    <property type="entry name" value="RNA_helicase_DEAD_Q_motif"/>
</dbReference>
<dbReference type="PANTHER" id="PTHR47959">
    <property type="entry name" value="ATP-DEPENDENT RNA HELICASE RHLE-RELATED"/>
    <property type="match status" value="1"/>
</dbReference>
<dbReference type="PANTHER" id="PTHR47959:SF21">
    <property type="entry name" value="DEAD-BOX HELICASE 56"/>
    <property type="match status" value="1"/>
</dbReference>
<dbReference type="Pfam" id="PF00270">
    <property type="entry name" value="DEAD"/>
    <property type="match status" value="1"/>
</dbReference>
<dbReference type="Pfam" id="PF00271">
    <property type="entry name" value="Helicase_C"/>
    <property type="match status" value="2"/>
</dbReference>
<dbReference type="SMART" id="SM00487">
    <property type="entry name" value="DEXDc"/>
    <property type="match status" value="1"/>
</dbReference>
<dbReference type="SMART" id="SM00490">
    <property type="entry name" value="HELICc"/>
    <property type="match status" value="1"/>
</dbReference>
<dbReference type="SUPFAM" id="SSF52540">
    <property type="entry name" value="P-loop containing nucleoside triphosphate hydrolases"/>
    <property type="match status" value="2"/>
</dbReference>
<dbReference type="PROSITE" id="PS51192">
    <property type="entry name" value="HELICASE_ATP_BIND_1"/>
    <property type="match status" value="1"/>
</dbReference>
<dbReference type="PROSITE" id="PS51194">
    <property type="entry name" value="HELICASE_CTER"/>
    <property type="match status" value="1"/>
</dbReference>
<dbReference type="PROSITE" id="PS51195">
    <property type="entry name" value="Q_MOTIF"/>
    <property type="match status" value="1"/>
</dbReference>
<name>DBP9_ASPTN</name>
<comment type="function">
    <text evidence="1">ATP-binding RNA helicase involved in the biogenesis of 60S ribosomal subunits and is required for the normal formation of 25S and 5.8S rRNAs.</text>
</comment>
<comment type="catalytic activity">
    <reaction>
        <text>ATP + H2O = ADP + phosphate + H(+)</text>
        <dbReference type="Rhea" id="RHEA:13065"/>
        <dbReference type="ChEBI" id="CHEBI:15377"/>
        <dbReference type="ChEBI" id="CHEBI:15378"/>
        <dbReference type="ChEBI" id="CHEBI:30616"/>
        <dbReference type="ChEBI" id="CHEBI:43474"/>
        <dbReference type="ChEBI" id="CHEBI:456216"/>
        <dbReference type="EC" id="3.6.4.13"/>
    </reaction>
</comment>
<comment type="subcellular location">
    <subcellularLocation>
        <location evidence="1">Nucleus</location>
        <location evidence="1">Nucleolus</location>
    </subcellularLocation>
</comment>
<comment type="domain">
    <text>The Q motif is unique to and characteristic of the DEAD box family of RNA helicases and controls ATP binding and hydrolysis.</text>
</comment>
<comment type="similarity">
    <text evidence="5">Belongs to the DEAD box helicase family. DDX56/DBP9 subfamily.</text>
</comment>
<comment type="sequence caution" evidence="5">
    <conflict type="erroneous gene model prediction">
        <sequence resource="EMBL-CDS" id="EAU38143"/>
    </conflict>
</comment>
<reference key="1">
    <citation type="submission" date="2005-09" db="EMBL/GenBank/DDBJ databases">
        <title>Annotation of the Aspergillus terreus NIH2624 genome.</title>
        <authorList>
            <person name="Birren B.W."/>
            <person name="Lander E.S."/>
            <person name="Galagan J.E."/>
            <person name="Nusbaum C."/>
            <person name="Devon K."/>
            <person name="Henn M."/>
            <person name="Ma L.-J."/>
            <person name="Jaffe D.B."/>
            <person name="Butler J."/>
            <person name="Alvarez P."/>
            <person name="Gnerre S."/>
            <person name="Grabherr M."/>
            <person name="Kleber M."/>
            <person name="Mauceli E.W."/>
            <person name="Brockman W."/>
            <person name="Rounsley S."/>
            <person name="Young S.K."/>
            <person name="LaButti K."/>
            <person name="Pushparaj V."/>
            <person name="DeCaprio D."/>
            <person name="Crawford M."/>
            <person name="Koehrsen M."/>
            <person name="Engels R."/>
            <person name="Montgomery P."/>
            <person name="Pearson M."/>
            <person name="Howarth C."/>
            <person name="Larson L."/>
            <person name="Luoma S."/>
            <person name="White J."/>
            <person name="Alvarado L."/>
            <person name="Kodira C.D."/>
            <person name="Zeng Q."/>
            <person name="Oleary S."/>
            <person name="Yandava C."/>
            <person name="Denning D.W."/>
            <person name="Nierman W.C."/>
            <person name="Milne T."/>
            <person name="Madden K."/>
        </authorList>
    </citation>
    <scope>NUCLEOTIDE SEQUENCE [LARGE SCALE GENOMIC DNA]</scope>
    <source>
        <strain>NIH 2624 / FGSC A1156</strain>
    </source>
</reference>
<feature type="chain" id="PRO_0000281719" description="ATP-dependent RNA helicase dbp9">
    <location>
        <begin position="1"/>
        <end position="619"/>
    </location>
</feature>
<feature type="domain" description="Helicase ATP-binding" evidence="2">
    <location>
        <begin position="58"/>
        <end position="236"/>
    </location>
</feature>
<feature type="domain" description="Helicase C-terminal" evidence="3">
    <location>
        <begin position="247"/>
        <end position="484"/>
    </location>
</feature>
<feature type="region of interest" description="Disordered" evidence="4">
    <location>
        <begin position="1"/>
        <end position="22"/>
    </location>
</feature>
<feature type="region of interest" description="Disordered" evidence="4">
    <location>
        <begin position="340"/>
        <end position="391"/>
    </location>
</feature>
<feature type="region of interest" description="Disordered" evidence="4">
    <location>
        <begin position="586"/>
        <end position="619"/>
    </location>
</feature>
<feature type="short sequence motif" description="Q motif">
    <location>
        <begin position="27"/>
        <end position="55"/>
    </location>
</feature>
<feature type="short sequence motif" description="DEAD box">
    <location>
        <begin position="184"/>
        <end position="187"/>
    </location>
</feature>
<feature type="compositionally biased region" description="Basic residues" evidence="4">
    <location>
        <begin position="587"/>
        <end position="599"/>
    </location>
</feature>
<feature type="binding site" evidence="2">
    <location>
        <begin position="71"/>
        <end position="78"/>
    </location>
    <ligand>
        <name>ATP</name>
        <dbReference type="ChEBI" id="CHEBI:30616"/>
    </ligand>
</feature>
<evidence type="ECO:0000250" key="1"/>
<evidence type="ECO:0000255" key="2">
    <source>
        <dbReference type="PROSITE-ProRule" id="PRU00541"/>
    </source>
</evidence>
<evidence type="ECO:0000255" key="3">
    <source>
        <dbReference type="PROSITE-ProRule" id="PRU00542"/>
    </source>
</evidence>
<evidence type="ECO:0000256" key="4">
    <source>
        <dbReference type="SAM" id="MobiDB-lite"/>
    </source>
</evidence>
<evidence type="ECO:0000305" key="5"/>
<sequence>MKRKLDANDVPSPEAADDSVKNDVDNLDFESLNLDPRLRQALVKEKFTKPTLVQAKAIPLALEGKDILARAKTGSGKTAAYVLPILQTILQKKANDPSLKATTGLILVPTRELAEQVQNVITTFAAFCGKDVRSVNLTQKVSDAVQRTMLADYPDLIVSTPSRVIANLGSSALSLENLTHLVIDEADLVLSYGYDEDINALAKAIPRGVQTFLMSATLTAEVDTLKGLFCRSPVILKLEDKDDQGSGVSQFVVKCAEDEKFLLTYVIFKLQLIKGKVIIFVGDVDRCYRVKLFLEQFGIKSCVLNSELPVNSRLHVVQEFNKGVYDIIIAADEQEVMGARKSKKSKEAEENDAGEAAGSSDEDEGEAQKPSTTRSDKPSEKRRKTAGKDKDYGISRGIDFQNVACVLNFDLPTTSKSYTHRIGRTGRAGKTGMALSFVVPADQFGKHKPTSFPTAKHDETVLAKITKRQAKLGHEVKPYHFEMKQVDAFRYRMTDALRSITRLAVQEARAREIRQELIKSEKLKRHFEENPEELRQLRHDDELRSARIQPHLKHIPDYLMPSKGKKGISSENVGYVGFRKTSENRIRKAREKNRGKGKGRNYAGVKKVDPLKTFNRGRK</sequence>